<dbReference type="EMBL" id="CU329671">
    <property type="protein sequence ID" value="CAA16921.1"/>
    <property type="molecule type" value="Genomic_DNA"/>
</dbReference>
<dbReference type="PIR" id="T39559">
    <property type="entry name" value="T39559"/>
</dbReference>
<dbReference type="RefSeq" id="NP_596806.1">
    <property type="nucleotide sequence ID" value="NM_001023827.2"/>
</dbReference>
<dbReference type="PDB" id="8Q1B">
    <property type="method" value="EM"/>
    <property type="resolution" value="3.40 A"/>
    <property type="chains" value="F/Q=1-214"/>
</dbReference>
<dbReference type="PDBsum" id="8Q1B"/>
<dbReference type="EMDB" id="EMD-18062"/>
<dbReference type="SMR" id="O42932"/>
<dbReference type="BioGRID" id="276677">
    <property type="interactions" value="20"/>
</dbReference>
<dbReference type="ComplexPortal" id="CPX-9308">
    <property type="entry name" value="Mitochondrial respiratory chain complex III"/>
</dbReference>
<dbReference type="FunCoup" id="O42932">
    <property type="interactions" value="67"/>
</dbReference>
<dbReference type="STRING" id="284812.O42932"/>
<dbReference type="iPTMnet" id="O42932"/>
<dbReference type="PaxDb" id="4896-SPBC16C6.08c.1"/>
<dbReference type="EnsemblFungi" id="SPBC16C6.08c.1">
    <property type="protein sequence ID" value="SPBC16C6.08c.1:pep"/>
    <property type="gene ID" value="SPBC16C6.08c"/>
</dbReference>
<dbReference type="PomBase" id="SPBC16C6.08c">
    <property type="gene designation" value="qcr6"/>
</dbReference>
<dbReference type="VEuPathDB" id="FungiDB:SPBC16C6.08c"/>
<dbReference type="eggNOG" id="KOG4763">
    <property type="taxonomic scope" value="Eukaryota"/>
</dbReference>
<dbReference type="HOGENOM" id="CLU_1289608_0_0_1"/>
<dbReference type="InParanoid" id="O42932"/>
<dbReference type="OMA" id="HCARDCA"/>
<dbReference type="Reactome" id="R-SPO-611105">
    <property type="pathway name" value="Respiratory electron transport"/>
</dbReference>
<dbReference type="PRO" id="PR:O42932"/>
<dbReference type="Proteomes" id="UP000002485">
    <property type="component" value="Chromosome II"/>
</dbReference>
<dbReference type="GO" id="GO:0005743">
    <property type="term" value="C:mitochondrial inner membrane"/>
    <property type="evidence" value="ECO:0000305"/>
    <property type="project" value="PomBase"/>
</dbReference>
<dbReference type="GO" id="GO:0005739">
    <property type="term" value="C:mitochondrion"/>
    <property type="evidence" value="ECO:0007005"/>
    <property type="project" value="PomBase"/>
</dbReference>
<dbReference type="GO" id="GO:0045275">
    <property type="term" value="C:respiratory chain complex III"/>
    <property type="evidence" value="ECO:0000318"/>
    <property type="project" value="GO_Central"/>
</dbReference>
<dbReference type="GO" id="GO:0006122">
    <property type="term" value="P:mitochondrial electron transport, ubiquinol to cytochrome c"/>
    <property type="evidence" value="ECO:0000318"/>
    <property type="project" value="GO_Central"/>
</dbReference>
<dbReference type="GO" id="GO:1902600">
    <property type="term" value="P:proton transmembrane transport"/>
    <property type="evidence" value="ECO:0007669"/>
    <property type="project" value="GOC"/>
</dbReference>
<dbReference type="Gene3D" id="1.10.287.20">
    <property type="entry name" value="Ubiquinol-cytochrome C reductase hinge domain"/>
    <property type="match status" value="1"/>
</dbReference>
<dbReference type="InterPro" id="IPR003422">
    <property type="entry name" value="Cyt_b-c1_6"/>
</dbReference>
<dbReference type="InterPro" id="IPR023184">
    <property type="entry name" value="Ubol_cytC_Rdtase_hinge_dom"/>
</dbReference>
<dbReference type="InterPro" id="IPR036811">
    <property type="entry name" value="Ubol_cytC_Rdtase_hinge_dom_sf"/>
</dbReference>
<dbReference type="PANTHER" id="PTHR15336:SF0">
    <property type="entry name" value="CYTOCHROME B-C1 COMPLEX SUBUNIT 6, MITOCHONDRIAL"/>
    <property type="match status" value="1"/>
</dbReference>
<dbReference type="PANTHER" id="PTHR15336">
    <property type="entry name" value="UBIQUINOL-CYTOCHROME C REDUCTASE COMPLEX 7.8 KDA PROTEIN"/>
    <property type="match status" value="1"/>
</dbReference>
<dbReference type="Pfam" id="PF02320">
    <property type="entry name" value="UCR_hinge"/>
    <property type="match status" value="1"/>
</dbReference>
<dbReference type="SUPFAM" id="SSF81531">
    <property type="entry name" value="Non-heme 11 kDa protein of cytochrome bc1 complex (Ubiquinol-cytochrome c reductase)"/>
    <property type="match status" value="1"/>
</dbReference>
<evidence type="ECO:0000250" key="1">
    <source>
        <dbReference type="UniProtKB" id="P00126"/>
    </source>
</evidence>
<evidence type="ECO:0000250" key="2">
    <source>
        <dbReference type="UniProtKB" id="P00127"/>
    </source>
</evidence>
<evidence type="ECO:0000256" key="3">
    <source>
        <dbReference type="SAM" id="MobiDB-lite"/>
    </source>
</evidence>
<evidence type="ECO:0000305" key="4"/>
<keyword id="KW-0002">3D-structure</keyword>
<keyword id="KW-1015">Disulfide bond</keyword>
<keyword id="KW-0249">Electron transport</keyword>
<keyword id="KW-0472">Membrane</keyword>
<keyword id="KW-0496">Mitochondrion</keyword>
<keyword id="KW-0999">Mitochondrion inner membrane</keyword>
<keyword id="KW-1185">Reference proteome</keyword>
<keyword id="KW-0679">Respiratory chain</keyword>
<keyword id="KW-0813">Transport</keyword>
<accession>O42932</accession>
<proteinExistence type="evidence at protein level"/>
<organism>
    <name type="scientific">Schizosaccharomyces pombe (strain 972 / ATCC 24843)</name>
    <name type="common">Fission yeast</name>
    <dbReference type="NCBI Taxonomy" id="284812"/>
    <lineage>
        <taxon>Eukaryota</taxon>
        <taxon>Fungi</taxon>
        <taxon>Dikarya</taxon>
        <taxon>Ascomycota</taxon>
        <taxon>Taphrinomycotina</taxon>
        <taxon>Schizosaccharomycetes</taxon>
        <taxon>Schizosaccharomycetales</taxon>
        <taxon>Schizosaccharomycetaceae</taxon>
        <taxon>Schizosaccharomyces</taxon>
    </lineage>
</organism>
<feature type="chain" id="PRO_0000307212" description="Cytochrome b-c1 complex subunit 6">
    <location>
        <begin position="1"/>
        <end position="214"/>
    </location>
</feature>
<feature type="region of interest" description="Disordered" evidence="3">
    <location>
        <begin position="25"/>
        <end position="157"/>
    </location>
</feature>
<feature type="compositionally biased region" description="Basic and acidic residues" evidence="3">
    <location>
        <begin position="25"/>
        <end position="40"/>
    </location>
</feature>
<feature type="compositionally biased region" description="Polar residues" evidence="3">
    <location>
        <begin position="41"/>
        <end position="56"/>
    </location>
</feature>
<feature type="compositionally biased region" description="Basic and acidic residues" evidence="3">
    <location>
        <begin position="84"/>
        <end position="125"/>
    </location>
</feature>
<feature type="compositionally biased region" description="Acidic residues" evidence="3">
    <location>
        <begin position="126"/>
        <end position="148"/>
    </location>
</feature>
<feature type="disulfide bond" evidence="1">
    <location>
        <begin position="157"/>
        <end position="204"/>
    </location>
</feature>
<feature type="disulfide bond" evidence="2">
    <location>
        <begin position="173"/>
        <end position="190"/>
    </location>
</feature>
<comment type="function">
    <text evidence="2">Component of the ubiquinol-cytochrome c oxidoreductase, a multisubunit transmembrane complex that is part of the mitochondrial electron transport chain which drives oxidative phosphorylation. The respiratory chain contains 3 multisubunit complexes succinate dehydrogenase (complex II, CII), ubiquinol-cytochrome c oxidoreductase (cytochrome b-c1 complex, complex III, CIII) and cytochrome c oxidase (complex IV, CIV), that cooperate to transfer electrons derived from NADH and succinate to molecular oxygen, creating an electrochemical gradient over the inner membrane that drives transmembrane transport and the ATP synthase. The cytochrome b-c1 complex catalyzes electron transfer from ubiquinol to cytochrome c, linking this redox reaction to translocation of protons across the mitochondrial inner membrane, with protons being carried across the membrane as hydrogens on the quinol. In the process called Q cycle, 2 protons are consumed from the matrix, 4 protons are released into the intermembrane space and 2 electrons are passed to cytochrome c.</text>
</comment>
<comment type="subunit">
    <text evidence="2">Component of the ubiquinol-cytochrome c oxidoreductase (cytochrome b-c1 complex, complex III, CIII), a multisubunit enzyme composed of 3 respiratory subunits cytochrome b, cytochrome c1 and Rieske protein, 2 core protein subunits, and additional low-molecular weight protein subunits. The complex exists as an obligatory dimer and forms supercomplexes (SCs) in the inner mitochondrial membrane with cytochrome c oxidase (complex IV, CIV).</text>
</comment>
<comment type="subcellular location">
    <subcellularLocation>
        <location evidence="2">Mitochondrion inner membrane</location>
        <topology evidence="2">Peripheral membrane protein</topology>
        <orientation evidence="2">Intermembrane side</orientation>
    </subcellularLocation>
</comment>
<comment type="similarity">
    <text evidence="4">Belongs to the UQCRH/QCR6 family.</text>
</comment>
<sequence length="214" mass="24308">MSFWKNLFTSAFTPISAEADELIKEDRKQFEENTPSKKNFETQSPDEPSPKTTDSTGARDANLSLKTQEPIVSADDAKGAQGKGADEKEEKKETIQPPEEVKTEPPQPEEKEGKEAKEPEEPPKEEAEEPQEGGEEEEEEEEEEEITDPLEKMTQECMDAPDCKEVKHHFEECTARVTKKVEQGDKSEDCIEEFFHLYHCARDCADPKVFKVLV</sequence>
<gene>
    <name type="primary">qcr6</name>
    <name type="ORF">SPBC16C6.08c</name>
</gene>
<reference key="1">
    <citation type="journal article" date="2002" name="Nature">
        <title>The genome sequence of Schizosaccharomyces pombe.</title>
        <authorList>
            <person name="Wood V."/>
            <person name="Gwilliam R."/>
            <person name="Rajandream M.A."/>
            <person name="Lyne M.H."/>
            <person name="Lyne R."/>
            <person name="Stewart A."/>
            <person name="Sgouros J.G."/>
            <person name="Peat N."/>
            <person name="Hayles J."/>
            <person name="Baker S.G."/>
            <person name="Basham D."/>
            <person name="Bowman S."/>
            <person name="Brooks K."/>
            <person name="Brown D."/>
            <person name="Brown S."/>
            <person name="Chillingworth T."/>
            <person name="Churcher C.M."/>
            <person name="Collins M."/>
            <person name="Connor R."/>
            <person name="Cronin A."/>
            <person name="Davis P."/>
            <person name="Feltwell T."/>
            <person name="Fraser A."/>
            <person name="Gentles S."/>
            <person name="Goble A."/>
            <person name="Hamlin N."/>
            <person name="Harris D.E."/>
            <person name="Hidalgo J."/>
            <person name="Hodgson G."/>
            <person name="Holroyd S."/>
            <person name="Hornsby T."/>
            <person name="Howarth S."/>
            <person name="Huckle E.J."/>
            <person name="Hunt S."/>
            <person name="Jagels K."/>
            <person name="James K.D."/>
            <person name="Jones L."/>
            <person name="Jones M."/>
            <person name="Leather S."/>
            <person name="McDonald S."/>
            <person name="McLean J."/>
            <person name="Mooney P."/>
            <person name="Moule S."/>
            <person name="Mungall K.L."/>
            <person name="Murphy L.D."/>
            <person name="Niblett D."/>
            <person name="Odell C."/>
            <person name="Oliver K."/>
            <person name="O'Neil S."/>
            <person name="Pearson D."/>
            <person name="Quail M.A."/>
            <person name="Rabbinowitsch E."/>
            <person name="Rutherford K.M."/>
            <person name="Rutter S."/>
            <person name="Saunders D."/>
            <person name="Seeger K."/>
            <person name="Sharp S."/>
            <person name="Skelton J."/>
            <person name="Simmonds M.N."/>
            <person name="Squares R."/>
            <person name="Squares S."/>
            <person name="Stevens K."/>
            <person name="Taylor K."/>
            <person name="Taylor R.G."/>
            <person name="Tivey A."/>
            <person name="Walsh S.V."/>
            <person name="Warren T."/>
            <person name="Whitehead S."/>
            <person name="Woodward J.R."/>
            <person name="Volckaert G."/>
            <person name="Aert R."/>
            <person name="Robben J."/>
            <person name="Grymonprez B."/>
            <person name="Weltjens I."/>
            <person name="Vanstreels E."/>
            <person name="Rieger M."/>
            <person name="Schaefer M."/>
            <person name="Mueller-Auer S."/>
            <person name="Gabel C."/>
            <person name="Fuchs M."/>
            <person name="Duesterhoeft A."/>
            <person name="Fritzc C."/>
            <person name="Holzer E."/>
            <person name="Moestl D."/>
            <person name="Hilbert H."/>
            <person name="Borzym K."/>
            <person name="Langer I."/>
            <person name="Beck A."/>
            <person name="Lehrach H."/>
            <person name="Reinhardt R."/>
            <person name="Pohl T.M."/>
            <person name="Eger P."/>
            <person name="Zimmermann W."/>
            <person name="Wedler H."/>
            <person name="Wambutt R."/>
            <person name="Purnelle B."/>
            <person name="Goffeau A."/>
            <person name="Cadieu E."/>
            <person name="Dreano S."/>
            <person name="Gloux S."/>
            <person name="Lelaure V."/>
            <person name="Mottier S."/>
            <person name="Galibert F."/>
            <person name="Aves S.J."/>
            <person name="Xiang Z."/>
            <person name="Hunt C."/>
            <person name="Moore K."/>
            <person name="Hurst S.M."/>
            <person name="Lucas M."/>
            <person name="Rochet M."/>
            <person name="Gaillardin C."/>
            <person name="Tallada V.A."/>
            <person name="Garzon A."/>
            <person name="Thode G."/>
            <person name="Daga R.R."/>
            <person name="Cruzado L."/>
            <person name="Jimenez J."/>
            <person name="Sanchez M."/>
            <person name="del Rey F."/>
            <person name="Benito J."/>
            <person name="Dominguez A."/>
            <person name="Revuelta J.L."/>
            <person name="Moreno S."/>
            <person name="Armstrong J."/>
            <person name="Forsburg S.L."/>
            <person name="Cerutti L."/>
            <person name="Lowe T."/>
            <person name="McCombie W.R."/>
            <person name="Paulsen I."/>
            <person name="Potashkin J."/>
            <person name="Shpakovski G.V."/>
            <person name="Ussery D."/>
            <person name="Barrell B.G."/>
            <person name="Nurse P."/>
        </authorList>
    </citation>
    <scope>NUCLEOTIDE SEQUENCE [LARGE SCALE GENOMIC DNA]</scope>
    <source>
        <strain>972 / ATCC 24843</strain>
    </source>
</reference>
<name>QCR6_SCHPO</name>
<protein>
    <recommendedName>
        <fullName>Cytochrome b-c1 complex subunit 6</fullName>
    </recommendedName>
    <alternativeName>
        <fullName>Complex III subunit 6</fullName>
    </alternativeName>
    <alternativeName>
        <fullName>Mitochondrial hinge protein</fullName>
    </alternativeName>
    <alternativeName>
        <fullName>Ubiquinol-cytochrome c reductase complex subunit 6</fullName>
    </alternativeName>
</protein>